<protein>
    <recommendedName>
        <fullName evidence="1">Bifunctional polymyxin resistance protein ArnA</fullName>
    </recommendedName>
    <domain>
        <recommendedName>
            <fullName evidence="1">UDP-4-amino-4-deoxy-L-arabinose formyltransferase</fullName>
            <ecNumber evidence="1">2.1.2.13</ecNumber>
        </recommendedName>
        <alternativeName>
            <fullName evidence="1">ArnAFT</fullName>
        </alternativeName>
        <alternativeName>
            <fullName evidence="1">UDP-L-Ara4N formyltransferase</fullName>
        </alternativeName>
    </domain>
    <domain>
        <recommendedName>
            <fullName evidence="1">UDP-glucuronic acid oxidase, UDP-4-keto-hexauronic acid decarboxylating</fullName>
            <ecNumber evidence="1">1.1.1.305</ecNumber>
        </recommendedName>
        <alternativeName>
            <fullName evidence="1">ArnADH</fullName>
        </alternativeName>
        <alternativeName>
            <fullName evidence="1">UDP-GlcUA decarboxylase</fullName>
        </alternativeName>
        <alternativeName>
            <fullName evidence="1">UDP-glucuronic acid dehydrogenase</fullName>
        </alternativeName>
    </domain>
</protein>
<sequence>MKAIVFAYHDIGCVGLEALALAGYEIQAVFTHSDAPGENHFYASVAKTAAGMDVPVFAPEDINHPLWVNRIRELAPDVIFSFYYRTILSDDILQLPSFGAFNLHGSLLPRYRGRAPVNWVLVNGETQTGVTLHKMVSRADAGDIVAQSVVAIDDEDTALTLHGKCRTAAATLLAQQLPLIRSREIALTPQDDSQASYFGRRTAADGLIDWQKSAHEINNLIRAVTEPYPGAFTFLGERKVIIWRARVVKNNRVNVNHPHGGDAGSIISTSPLVVSCGEDALEIVSGQSEAGLYMSGSRLAAEMGMVPQARLGNLASRVQRRRTRVLILGVNGFIGNHLTERLLRDDRYEIYGLDISSDAIARFLGDPRFHFVEGDISIHNEWIEYHIKKCDVILPLVAIATPIEYTRNPLRVFELDFEENLKIVRDCVRYNKRIVFPSTSEVYGMCDDKEFDEDTSRLIVGPINKQRWIYSVSKQLLDRVIWAYGAKNGLRFTLFRPFNWMGPRLDTLDAARIGSSRAITQLILNLVEGSPIKLVDGGAQKRCFTDIHDGIEALFRVIENRNGQCDGQIINIGNPHNEASIRELGEMLLTSFNAHPLRDRFPPFAGFIDVESSSYYGKGYQDVAHRTPSIRNAKRLLEWEPTVKMEQTVAETLDYFLRTVDVPHTADATDTQG</sequence>
<reference key="1">
    <citation type="journal article" date="2004" name="Proc. Natl. Acad. Sci. U.S.A.">
        <title>Genome sequence of the enterobacterial phytopathogen Erwinia carotovora subsp. atroseptica and characterization of virulence factors.</title>
        <authorList>
            <person name="Bell K.S."/>
            <person name="Sebaihia M."/>
            <person name="Pritchard L."/>
            <person name="Holden M.T.G."/>
            <person name="Hyman L.J."/>
            <person name="Holeva M.C."/>
            <person name="Thomson N.R."/>
            <person name="Bentley S.D."/>
            <person name="Churcher L.J.C."/>
            <person name="Mungall K."/>
            <person name="Atkin R."/>
            <person name="Bason N."/>
            <person name="Brooks K."/>
            <person name="Chillingworth T."/>
            <person name="Clark K."/>
            <person name="Doggett J."/>
            <person name="Fraser A."/>
            <person name="Hance Z."/>
            <person name="Hauser H."/>
            <person name="Jagels K."/>
            <person name="Moule S."/>
            <person name="Norbertczak H."/>
            <person name="Ormond D."/>
            <person name="Price C."/>
            <person name="Quail M.A."/>
            <person name="Sanders M."/>
            <person name="Walker D."/>
            <person name="Whitehead S."/>
            <person name="Salmond G.P.C."/>
            <person name="Birch P.R.J."/>
            <person name="Parkhill J."/>
            <person name="Toth I.K."/>
        </authorList>
    </citation>
    <scope>NUCLEOTIDE SEQUENCE [LARGE SCALE GENOMIC DNA]</scope>
    <source>
        <strain>SCRI 1043 / ATCC BAA-672</strain>
    </source>
</reference>
<dbReference type="EC" id="2.1.2.13" evidence="1"/>
<dbReference type="EC" id="1.1.1.305" evidence="1"/>
<dbReference type="EMBL" id="BX950851">
    <property type="protein sequence ID" value="CAG76043.1"/>
    <property type="molecule type" value="Genomic_DNA"/>
</dbReference>
<dbReference type="RefSeq" id="WP_011094667.1">
    <property type="nucleotide sequence ID" value="NC_004547.2"/>
</dbReference>
<dbReference type="SMR" id="Q6D2F1"/>
<dbReference type="STRING" id="218491.ECA3144"/>
<dbReference type="GeneID" id="57209829"/>
<dbReference type="KEGG" id="eca:ECA3144"/>
<dbReference type="PATRIC" id="fig|218491.5.peg.3181"/>
<dbReference type="eggNOG" id="COG0223">
    <property type="taxonomic scope" value="Bacteria"/>
</dbReference>
<dbReference type="eggNOG" id="COG0451">
    <property type="taxonomic scope" value="Bacteria"/>
</dbReference>
<dbReference type="HOGENOM" id="CLU_007383_23_1_6"/>
<dbReference type="OrthoDB" id="9802815at2"/>
<dbReference type="UniPathway" id="UPA00030"/>
<dbReference type="UniPathway" id="UPA00032">
    <property type="reaction ID" value="UER00492"/>
</dbReference>
<dbReference type="UniPathway" id="UPA00032">
    <property type="reaction ID" value="UER00494"/>
</dbReference>
<dbReference type="Proteomes" id="UP000007966">
    <property type="component" value="Chromosome"/>
</dbReference>
<dbReference type="GO" id="GO:0016020">
    <property type="term" value="C:membrane"/>
    <property type="evidence" value="ECO:0007669"/>
    <property type="project" value="GOC"/>
</dbReference>
<dbReference type="GO" id="GO:0016831">
    <property type="term" value="F:carboxy-lyase activity"/>
    <property type="evidence" value="ECO:0007669"/>
    <property type="project" value="InterPro"/>
</dbReference>
<dbReference type="GO" id="GO:0099619">
    <property type="term" value="F:UDP-4-amino-4-deoxy-L-arabinose formyltransferase activity"/>
    <property type="evidence" value="ECO:0007669"/>
    <property type="project" value="UniProtKB-EC"/>
</dbReference>
<dbReference type="GO" id="GO:0099618">
    <property type="term" value="F:UDP-glucuronate dehydrogenase activity"/>
    <property type="evidence" value="ECO:0007669"/>
    <property type="project" value="UniProtKB-EC"/>
</dbReference>
<dbReference type="GO" id="GO:0009245">
    <property type="term" value="P:lipid A biosynthetic process"/>
    <property type="evidence" value="ECO:0007669"/>
    <property type="project" value="UniProtKB-KW"/>
</dbReference>
<dbReference type="GO" id="GO:0009103">
    <property type="term" value="P:lipopolysaccharide biosynthetic process"/>
    <property type="evidence" value="ECO:0007669"/>
    <property type="project" value="UniProtKB-UniRule"/>
</dbReference>
<dbReference type="GO" id="GO:0046677">
    <property type="term" value="P:response to antibiotic"/>
    <property type="evidence" value="ECO:0007669"/>
    <property type="project" value="UniProtKB-KW"/>
</dbReference>
<dbReference type="CDD" id="cd08702">
    <property type="entry name" value="Arna_FMT_C"/>
    <property type="match status" value="1"/>
</dbReference>
<dbReference type="CDD" id="cd05257">
    <property type="entry name" value="Arna_like_SDR_e"/>
    <property type="match status" value="1"/>
</dbReference>
<dbReference type="FunFam" id="3.40.50.720:FF:000197">
    <property type="entry name" value="Bifunctional polymyxin resistance protein ArnA"/>
    <property type="match status" value="1"/>
</dbReference>
<dbReference type="Gene3D" id="3.40.50.12230">
    <property type="match status" value="1"/>
</dbReference>
<dbReference type="Gene3D" id="3.40.50.720">
    <property type="entry name" value="NAD(P)-binding Rossmann-like Domain"/>
    <property type="match status" value="1"/>
</dbReference>
<dbReference type="HAMAP" id="MF_01166">
    <property type="entry name" value="ArnA"/>
    <property type="match status" value="1"/>
</dbReference>
<dbReference type="InterPro" id="IPR045869">
    <property type="entry name" value="Arna-like_SDR_e"/>
</dbReference>
<dbReference type="InterPro" id="IPR021168">
    <property type="entry name" value="Bifun_polymyxin_resist_ArnA"/>
</dbReference>
<dbReference type="InterPro" id="IPR001509">
    <property type="entry name" value="Epimerase_deHydtase"/>
</dbReference>
<dbReference type="InterPro" id="IPR005793">
    <property type="entry name" value="Formyl_trans_C"/>
</dbReference>
<dbReference type="InterPro" id="IPR002376">
    <property type="entry name" value="Formyl_transf_N"/>
</dbReference>
<dbReference type="InterPro" id="IPR036477">
    <property type="entry name" value="Formyl_transf_N_sf"/>
</dbReference>
<dbReference type="InterPro" id="IPR011034">
    <property type="entry name" value="Formyl_transferase-like_C_sf"/>
</dbReference>
<dbReference type="InterPro" id="IPR050177">
    <property type="entry name" value="Lipid_A_modif_metabolic_enz"/>
</dbReference>
<dbReference type="InterPro" id="IPR036291">
    <property type="entry name" value="NAD(P)-bd_dom_sf"/>
</dbReference>
<dbReference type="NCBIfam" id="NF005414">
    <property type="entry name" value="PRK06988.1"/>
    <property type="match status" value="1"/>
</dbReference>
<dbReference type="NCBIfam" id="NF005998">
    <property type="entry name" value="PRK08125.1"/>
    <property type="match status" value="1"/>
</dbReference>
<dbReference type="NCBIfam" id="NF008872">
    <property type="entry name" value="PRK11908.1"/>
    <property type="match status" value="1"/>
</dbReference>
<dbReference type="PANTHER" id="PTHR43245">
    <property type="entry name" value="BIFUNCTIONAL POLYMYXIN RESISTANCE PROTEIN ARNA"/>
    <property type="match status" value="1"/>
</dbReference>
<dbReference type="PANTHER" id="PTHR43245:SF13">
    <property type="entry name" value="UDP-D-APIOSE_UDP-D-XYLOSE SYNTHASE 2"/>
    <property type="match status" value="1"/>
</dbReference>
<dbReference type="Pfam" id="PF01370">
    <property type="entry name" value="Epimerase"/>
    <property type="match status" value="1"/>
</dbReference>
<dbReference type="Pfam" id="PF02911">
    <property type="entry name" value="Formyl_trans_C"/>
    <property type="match status" value="1"/>
</dbReference>
<dbReference type="Pfam" id="PF00551">
    <property type="entry name" value="Formyl_trans_N"/>
    <property type="match status" value="1"/>
</dbReference>
<dbReference type="PIRSF" id="PIRSF036506">
    <property type="entry name" value="Bifun_polymyxin_resist_ArnA"/>
    <property type="match status" value="1"/>
</dbReference>
<dbReference type="SUPFAM" id="SSF50486">
    <property type="entry name" value="FMT C-terminal domain-like"/>
    <property type="match status" value="1"/>
</dbReference>
<dbReference type="SUPFAM" id="SSF53328">
    <property type="entry name" value="Formyltransferase"/>
    <property type="match status" value="1"/>
</dbReference>
<dbReference type="SUPFAM" id="SSF51735">
    <property type="entry name" value="NAD(P)-binding Rossmann-fold domains"/>
    <property type="match status" value="1"/>
</dbReference>
<name>ARNA_PECAS</name>
<keyword id="KW-0046">Antibiotic resistance</keyword>
<keyword id="KW-0441">Lipid A biosynthesis</keyword>
<keyword id="KW-0444">Lipid biosynthesis</keyword>
<keyword id="KW-0443">Lipid metabolism</keyword>
<keyword id="KW-0448">Lipopolysaccharide biosynthesis</keyword>
<keyword id="KW-0511">Multifunctional enzyme</keyword>
<keyword id="KW-0520">NAD</keyword>
<keyword id="KW-0560">Oxidoreductase</keyword>
<keyword id="KW-1185">Reference proteome</keyword>
<keyword id="KW-0808">Transferase</keyword>
<proteinExistence type="inferred from homology"/>
<comment type="function">
    <text evidence="1">Bifunctional enzyme that catalyzes the oxidative decarboxylation of UDP-glucuronic acid (UDP-GlcUA) to UDP-4-keto-arabinose (UDP-Ara4O) and the addition of a formyl group to UDP-4-amino-4-deoxy-L-arabinose (UDP-L-Ara4N) to form UDP-L-4-formamido-arabinose (UDP-L-Ara4FN). The modified arabinose is attached to lipid A and is required for resistance to polymyxin and cationic antimicrobial peptides.</text>
</comment>
<comment type="catalytic activity">
    <reaction evidence="1">
        <text>UDP-alpha-D-glucuronate + NAD(+) = UDP-beta-L-threo-pentopyranos-4-ulose + CO2 + NADH</text>
        <dbReference type="Rhea" id="RHEA:24702"/>
        <dbReference type="ChEBI" id="CHEBI:16526"/>
        <dbReference type="ChEBI" id="CHEBI:57540"/>
        <dbReference type="ChEBI" id="CHEBI:57945"/>
        <dbReference type="ChEBI" id="CHEBI:58052"/>
        <dbReference type="ChEBI" id="CHEBI:58710"/>
        <dbReference type="EC" id="1.1.1.305"/>
    </reaction>
</comment>
<comment type="catalytic activity">
    <reaction evidence="1">
        <text>UDP-4-amino-4-deoxy-beta-L-arabinose + (6R)-10-formyltetrahydrofolate = UDP-4-deoxy-4-formamido-beta-L-arabinose + (6S)-5,6,7,8-tetrahydrofolate + H(+)</text>
        <dbReference type="Rhea" id="RHEA:24706"/>
        <dbReference type="ChEBI" id="CHEBI:15378"/>
        <dbReference type="ChEBI" id="CHEBI:57453"/>
        <dbReference type="ChEBI" id="CHEBI:58708"/>
        <dbReference type="ChEBI" id="CHEBI:58709"/>
        <dbReference type="ChEBI" id="CHEBI:195366"/>
        <dbReference type="EC" id="2.1.2.13"/>
    </reaction>
</comment>
<comment type="pathway">
    <text evidence="1">Nucleotide-sugar biosynthesis; UDP-4-deoxy-4-formamido-beta-L-arabinose biosynthesis; UDP-4-deoxy-4-formamido-beta-L-arabinose from UDP-alpha-D-glucuronate: step 1/3.</text>
</comment>
<comment type="pathway">
    <text evidence="1">Nucleotide-sugar biosynthesis; UDP-4-deoxy-4-formamido-beta-L-arabinose biosynthesis; UDP-4-deoxy-4-formamido-beta-L-arabinose from UDP-alpha-D-glucuronate: step 3/3.</text>
</comment>
<comment type="pathway">
    <text evidence="1">Bacterial outer membrane biogenesis; lipopolysaccharide biosynthesis.</text>
</comment>
<comment type="subunit">
    <text evidence="1">Homohexamer, formed by a dimer of trimers.</text>
</comment>
<comment type="similarity">
    <text evidence="1">In the N-terminal section; belongs to the Fmt family. UDP-L-Ara4N formyltransferase subfamily.</text>
</comment>
<comment type="similarity">
    <text evidence="1">In the C-terminal section; belongs to the NAD(P)-dependent epimerase/dehydratase family. UDP-glucuronic acid decarboxylase subfamily.</text>
</comment>
<accession>Q6D2F1</accession>
<feature type="chain" id="PRO_0000083097" description="Bifunctional polymyxin resistance protein ArnA">
    <location>
        <begin position="1"/>
        <end position="673"/>
    </location>
</feature>
<feature type="region of interest" description="Formyltransferase ArnAFT">
    <location>
        <begin position="1"/>
        <end position="311"/>
    </location>
</feature>
<feature type="region of interest" description="Dehydrogenase ArnADH">
    <location>
        <begin position="321"/>
        <end position="673"/>
    </location>
</feature>
<feature type="active site" description="Proton donor; for formyltransferase activity" evidence="1">
    <location>
        <position position="104"/>
    </location>
</feature>
<feature type="active site" description="Proton acceptor; for decarboxylase activity" evidence="1">
    <location>
        <position position="441"/>
    </location>
</feature>
<feature type="active site" description="Proton donor; for decarboxylase activity" evidence="1">
    <location>
        <position position="626"/>
    </location>
</feature>
<feature type="binding site" evidence="1">
    <location>
        <position position="114"/>
    </location>
    <ligand>
        <name>(6R)-10-formyltetrahydrofolate</name>
        <dbReference type="ChEBI" id="CHEBI:195366"/>
    </ligand>
</feature>
<feature type="binding site" evidence="1">
    <location>
        <begin position="136"/>
        <end position="140"/>
    </location>
    <ligand>
        <name>(6R)-10-formyltetrahydrofolate</name>
        <dbReference type="ChEBI" id="CHEBI:195366"/>
    </ligand>
</feature>
<feature type="binding site" evidence="1">
    <location>
        <position position="354"/>
    </location>
    <ligand>
        <name>NAD(+)</name>
        <dbReference type="ChEBI" id="CHEBI:57540"/>
    </ligand>
</feature>
<feature type="binding site" evidence="1">
    <location>
        <begin position="375"/>
        <end position="376"/>
    </location>
    <ligand>
        <name>NAD(+)</name>
        <dbReference type="ChEBI" id="CHEBI:57540"/>
    </ligand>
</feature>
<feature type="binding site" evidence="1">
    <location>
        <position position="400"/>
    </location>
    <ligand>
        <name>UDP-alpha-D-glucuronate</name>
        <dbReference type="ChEBI" id="CHEBI:58052"/>
    </ligand>
</feature>
<feature type="binding site" evidence="1">
    <location>
        <position position="405"/>
    </location>
    <ligand>
        <name>UDP-alpha-D-glucuronate</name>
        <dbReference type="ChEBI" id="CHEBI:58052"/>
    </ligand>
</feature>
<feature type="binding site" evidence="1">
    <location>
        <begin position="439"/>
        <end position="440"/>
    </location>
    <ligand>
        <name>UDP-alpha-D-glucuronate</name>
        <dbReference type="ChEBI" id="CHEBI:58052"/>
    </ligand>
</feature>
<feature type="binding site" evidence="1">
    <location>
        <position position="467"/>
    </location>
    <ligand>
        <name>UDP-alpha-D-glucuronate</name>
        <dbReference type="ChEBI" id="CHEBI:58052"/>
    </ligand>
</feature>
<feature type="binding site" evidence="1">
    <location>
        <position position="499"/>
    </location>
    <ligand>
        <name>UDP-alpha-D-glucuronate</name>
        <dbReference type="ChEBI" id="CHEBI:58052"/>
    </ligand>
</feature>
<feature type="binding site" evidence="1">
    <location>
        <begin position="533"/>
        <end position="542"/>
    </location>
    <ligand>
        <name>UDP-alpha-D-glucuronate</name>
        <dbReference type="ChEBI" id="CHEBI:58052"/>
    </ligand>
</feature>
<feature type="binding site" evidence="1">
    <location>
        <position position="620"/>
    </location>
    <ligand>
        <name>UDP-alpha-D-glucuronate</name>
        <dbReference type="ChEBI" id="CHEBI:58052"/>
    </ligand>
</feature>
<feature type="site" description="Transition state stabilizer" evidence="1">
    <location>
        <position position="102"/>
    </location>
</feature>
<feature type="site" description="Raises pKa of active site His" evidence="1">
    <location>
        <position position="140"/>
    </location>
</feature>
<evidence type="ECO:0000255" key="1">
    <source>
        <dbReference type="HAMAP-Rule" id="MF_01166"/>
    </source>
</evidence>
<organism>
    <name type="scientific">Pectobacterium atrosepticum (strain SCRI 1043 / ATCC BAA-672)</name>
    <name type="common">Erwinia carotovora subsp. atroseptica</name>
    <dbReference type="NCBI Taxonomy" id="218491"/>
    <lineage>
        <taxon>Bacteria</taxon>
        <taxon>Pseudomonadati</taxon>
        <taxon>Pseudomonadota</taxon>
        <taxon>Gammaproteobacteria</taxon>
        <taxon>Enterobacterales</taxon>
        <taxon>Pectobacteriaceae</taxon>
        <taxon>Pectobacterium</taxon>
    </lineage>
</organism>
<gene>
    <name evidence="1" type="primary">arnA</name>
    <name type="ordered locus">ECA3144</name>
</gene>